<feature type="chain" id="PRO_0000318338" description="Protein translocase subunit SecA 2">
    <location>
        <begin position="1"/>
        <end position="764"/>
    </location>
</feature>
<feature type="binding site" evidence="1">
    <location>
        <position position="83"/>
    </location>
    <ligand>
        <name>ATP</name>
        <dbReference type="ChEBI" id="CHEBI:30616"/>
    </ligand>
</feature>
<feature type="binding site" evidence="1">
    <location>
        <begin position="101"/>
        <end position="105"/>
    </location>
    <ligand>
        <name>ATP</name>
        <dbReference type="ChEBI" id="CHEBI:30616"/>
    </ligand>
</feature>
<feature type="binding site" evidence="1">
    <location>
        <position position="490"/>
    </location>
    <ligand>
        <name>ATP</name>
        <dbReference type="ChEBI" id="CHEBI:30616"/>
    </ligand>
</feature>
<protein>
    <recommendedName>
        <fullName evidence="1">Protein translocase subunit SecA 2</fullName>
        <ecNumber evidence="1">7.4.2.8</ecNumber>
    </recommendedName>
</protein>
<proteinExistence type="inferred from homology"/>
<evidence type="ECO:0000255" key="1">
    <source>
        <dbReference type="HAMAP-Rule" id="MF_01382"/>
    </source>
</evidence>
<comment type="function">
    <text evidence="1">Part of the Sec protein translocase complex. Interacts with the SecYEG preprotein conducting channel. Has a central role in coupling the hydrolysis of ATP to the transfer of proteins into and across the cell membrane, serving as an ATP-driven molecular motor driving the stepwise translocation of polypeptide chains across the membrane.</text>
</comment>
<comment type="catalytic activity">
    <reaction evidence="1">
        <text>ATP + H2O + cellular proteinSide 1 = ADP + phosphate + cellular proteinSide 2.</text>
        <dbReference type="EC" id="7.4.2.8"/>
    </reaction>
</comment>
<comment type="subunit">
    <text evidence="1">Monomer and homodimer. Part of the essential Sec protein translocation apparatus which comprises SecA, SecYEG and auxiliary proteins SecDF. Other proteins may also be involved.</text>
</comment>
<comment type="subcellular location">
    <subcellularLocation>
        <location evidence="1">Cell membrane</location>
        <topology evidence="1">Peripheral membrane protein</topology>
        <orientation evidence="1">Cytoplasmic side</orientation>
    </subcellularLocation>
    <subcellularLocation>
        <location evidence="1">Cytoplasm</location>
    </subcellularLocation>
    <text evidence="1">Distribution is 50-50.</text>
</comment>
<comment type="similarity">
    <text evidence="1">Belongs to the SecA family.</text>
</comment>
<keyword id="KW-0067">ATP-binding</keyword>
<keyword id="KW-1003">Cell membrane</keyword>
<keyword id="KW-0963">Cytoplasm</keyword>
<keyword id="KW-0472">Membrane</keyword>
<keyword id="KW-0547">Nucleotide-binding</keyword>
<keyword id="KW-0653">Protein transport</keyword>
<keyword id="KW-1185">Reference proteome</keyword>
<keyword id="KW-1278">Translocase</keyword>
<keyword id="KW-0811">Translocation</keyword>
<keyword id="KW-0813">Transport</keyword>
<name>SECA2_CORDI</name>
<sequence length="764" mass="83954">MAGFRWFWDAMGGKNTRNQTKSKNIVAQAAKRGVQFASLSDADVVARAHECAQHSDDESRADLLALLSIGAQRSLSMNPFNVQLQAVLRILEGDVIHMATGEGKTLVGAMASVGYALQGKRVHSITVNDYLAERDAEWMGDLVRYFGLTVSAVTESLNTEQRRRAYASSIVYAPVTEIGFDVLRDQLVTQRSHAVQNGADVAIVDEADSVLIDEALVPLVLAGNEPGTAPAGRITEIVRRLKENEHYSVDADRRNVSLNDKGAALLEQVLGIQSLYDDAHIGTTLVQVNLALHAQALLIRDVHYIIRDGKIALIDASKGRVAQLQRWPDGVQAAVEAKEGLVVTEGGRILDTLTLQSLMGRYPIVCGMTGTAVEATDQLRQFYDLRVSVIEPHKQSQRFDEADRVYATQAEKFRALVKEIELLHTTGQPVLIGTSDVSESEELAQALQARDITVNVLNAKNDAEEAQIIAEAGDIGRVTVSTQMAGRGTDIRLGGANEKDRDAVVAKGGLAVIGSSRHRSSRLDNQLRGRAGRQGDPGLSLFFVSLEDDVVVVGGAGEEIKALPDADGRIDSKRITDFVAHCQRVTEGQLLEIHSQTWKYNKLLADQRVIIDERRARLLDTDQAWVELSEAVPEKAHKLSDKLDPAILVQAAREVMLYHLDRCWSDHLALMDHVRESIHLRTIARETPLDEYHRIAVREFKQLAQRAVDLAVETFRDVTIDQDGAHLADAGLTRPSATWTYMVSDNPLSNNNRSVINGIGSIFR</sequence>
<accession>Q6NHD5</accession>
<reference key="1">
    <citation type="journal article" date="2003" name="Nucleic Acids Res.">
        <title>The complete genome sequence and analysis of Corynebacterium diphtheriae NCTC13129.</title>
        <authorList>
            <person name="Cerdeno-Tarraga A.-M."/>
            <person name="Efstratiou A."/>
            <person name="Dover L.G."/>
            <person name="Holden M.T.G."/>
            <person name="Pallen M.J."/>
            <person name="Bentley S.D."/>
            <person name="Besra G.S."/>
            <person name="Churcher C.M."/>
            <person name="James K.D."/>
            <person name="De Zoysa A."/>
            <person name="Chillingworth T."/>
            <person name="Cronin A."/>
            <person name="Dowd L."/>
            <person name="Feltwell T."/>
            <person name="Hamlin N."/>
            <person name="Holroyd S."/>
            <person name="Jagels K."/>
            <person name="Moule S."/>
            <person name="Quail M.A."/>
            <person name="Rabbinowitsch E."/>
            <person name="Rutherford K.M."/>
            <person name="Thomson N.R."/>
            <person name="Unwin L."/>
            <person name="Whitehead S."/>
            <person name="Barrell B.G."/>
            <person name="Parkhill J."/>
        </authorList>
    </citation>
    <scope>NUCLEOTIDE SEQUENCE [LARGE SCALE GENOMIC DNA]</scope>
    <source>
        <strain>ATCC 700971 / NCTC 13129 / Biotype gravis</strain>
    </source>
</reference>
<gene>
    <name evidence="1" type="primary">secA2</name>
    <name type="ordered locus">DIP1203</name>
</gene>
<dbReference type="EC" id="7.4.2.8" evidence="1"/>
<dbReference type="EMBL" id="BX248357">
    <property type="protein sequence ID" value="CAE49730.1"/>
    <property type="molecule type" value="Genomic_DNA"/>
</dbReference>
<dbReference type="SMR" id="Q6NHD5"/>
<dbReference type="STRING" id="257309.DIP1203"/>
<dbReference type="KEGG" id="cdi:DIP1203"/>
<dbReference type="HOGENOM" id="CLU_005314_3_2_11"/>
<dbReference type="Proteomes" id="UP000002198">
    <property type="component" value="Chromosome"/>
</dbReference>
<dbReference type="GO" id="GO:0031522">
    <property type="term" value="C:cell envelope Sec protein transport complex"/>
    <property type="evidence" value="ECO:0007669"/>
    <property type="project" value="TreeGrafter"/>
</dbReference>
<dbReference type="GO" id="GO:0005829">
    <property type="term" value="C:cytosol"/>
    <property type="evidence" value="ECO:0007669"/>
    <property type="project" value="TreeGrafter"/>
</dbReference>
<dbReference type="GO" id="GO:0005886">
    <property type="term" value="C:plasma membrane"/>
    <property type="evidence" value="ECO:0007669"/>
    <property type="project" value="UniProtKB-SubCell"/>
</dbReference>
<dbReference type="GO" id="GO:0005524">
    <property type="term" value="F:ATP binding"/>
    <property type="evidence" value="ECO:0007669"/>
    <property type="project" value="UniProtKB-UniRule"/>
</dbReference>
<dbReference type="GO" id="GO:0008564">
    <property type="term" value="F:protein-exporting ATPase activity"/>
    <property type="evidence" value="ECO:0007669"/>
    <property type="project" value="UniProtKB-EC"/>
</dbReference>
<dbReference type="GO" id="GO:0065002">
    <property type="term" value="P:intracellular protein transmembrane transport"/>
    <property type="evidence" value="ECO:0007669"/>
    <property type="project" value="UniProtKB-UniRule"/>
</dbReference>
<dbReference type="GO" id="GO:0017038">
    <property type="term" value="P:protein import"/>
    <property type="evidence" value="ECO:0007669"/>
    <property type="project" value="InterPro"/>
</dbReference>
<dbReference type="GO" id="GO:0006605">
    <property type="term" value="P:protein targeting"/>
    <property type="evidence" value="ECO:0007669"/>
    <property type="project" value="UniProtKB-UniRule"/>
</dbReference>
<dbReference type="GO" id="GO:0043952">
    <property type="term" value="P:protein transport by the Sec complex"/>
    <property type="evidence" value="ECO:0007669"/>
    <property type="project" value="TreeGrafter"/>
</dbReference>
<dbReference type="CDD" id="cd17928">
    <property type="entry name" value="DEXDc_SecA"/>
    <property type="match status" value="1"/>
</dbReference>
<dbReference type="CDD" id="cd18803">
    <property type="entry name" value="SF2_C_secA"/>
    <property type="match status" value="1"/>
</dbReference>
<dbReference type="FunFam" id="3.40.50.300:FF:000429">
    <property type="entry name" value="Preprotein translocase subunit SecA"/>
    <property type="match status" value="1"/>
</dbReference>
<dbReference type="Gene3D" id="1.10.3060.10">
    <property type="entry name" value="Helical scaffold and wing domains of SecA"/>
    <property type="match status" value="1"/>
</dbReference>
<dbReference type="Gene3D" id="3.40.50.300">
    <property type="entry name" value="P-loop containing nucleotide triphosphate hydrolases"/>
    <property type="match status" value="3"/>
</dbReference>
<dbReference type="Gene3D" id="3.90.1440.10">
    <property type="entry name" value="SecA, preprotein cross-linking domain"/>
    <property type="match status" value="1"/>
</dbReference>
<dbReference type="HAMAP" id="MF_01382">
    <property type="entry name" value="SecA"/>
    <property type="match status" value="1"/>
</dbReference>
<dbReference type="InterPro" id="IPR014001">
    <property type="entry name" value="Helicase_ATP-bd"/>
</dbReference>
<dbReference type="InterPro" id="IPR001650">
    <property type="entry name" value="Helicase_C-like"/>
</dbReference>
<dbReference type="InterPro" id="IPR027417">
    <property type="entry name" value="P-loop_NTPase"/>
</dbReference>
<dbReference type="InterPro" id="IPR000185">
    <property type="entry name" value="SecA"/>
</dbReference>
<dbReference type="InterPro" id="IPR026389">
    <property type="entry name" value="SecA_Actinobact-type"/>
</dbReference>
<dbReference type="InterPro" id="IPR020937">
    <property type="entry name" value="SecA_CS"/>
</dbReference>
<dbReference type="InterPro" id="IPR011115">
    <property type="entry name" value="SecA_DEAD"/>
</dbReference>
<dbReference type="InterPro" id="IPR014018">
    <property type="entry name" value="SecA_motor_DEAD"/>
</dbReference>
<dbReference type="InterPro" id="IPR011130">
    <property type="entry name" value="SecA_preprotein_X-link_dom"/>
</dbReference>
<dbReference type="InterPro" id="IPR044722">
    <property type="entry name" value="SecA_SF2_C"/>
</dbReference>
<dbReference type="InterPro" id="IPR011116">
    <property type="entry name" value="SecA_Wing/Scaffold"/>
</dbReference>
<dbReference type="InterPro" id="IPR036266">
    <property type="entry name" value="SecA_Wing/Scaffold_sf"/>
</dbReference>
<dbReference type="InterPro" id="IPR036670">
    <property type="entry name" value="SecA_X-link_sf"/>
</dbReference>
<dbReference type="NCBIfam" id="TIGR04221">
    <property type="entry name" value="SecA2_Mycobac"/>
    <property type="match status" value="1"/>
</dbReference>
<dbReference type="PANTHER" id="PTHR30612:SF0">
    <property type="entry name" value="CHLOROPLAST PROTEIN-TRANSPORTING ATPASE"/>
    <property type="match status" value="1"/>
</dbReference>
<dbReference type="PANTHER" id="PTHR30612">
    <property type="entry name" value="SECA INNER MEMBRANE COMPONENT OF SEC PROTEIN SECRETION SYSTEM"/>
    <property type="match status" value="1"/>
</dbReference>
<dbReference type="Pfam" id="PF21090">
    <property type="entry name" value="P-loop_SecA"/>
    <property type="match status" value="1"/>
</dbReference>
<dbReference type="Pfam" id="PF07517">
    <property type="entry name" value="SecA_DEAD"/>
    <property type="match status" value="1"/>
</dbReference>
<dbReference type="Pfam" id="PF01043">
    <property type="entry name" value="SecA_PP_bind"/>
    <property type="match status" value="1"/>
</dbReference>
<dbReference type="Pfam" id="PF07516">
    <property type="entry name" value="SecA_SW"/>
    <property type="match status" value="1"/>
</dbReference>
<dbReference type="PRINTS" id="PR00906">
    <property type="entry name" value="SECA"/>
</dbReference>
<dbReference type="SMART" id="SM00957">
    <property type="entry name" value="SecA_DEAD"/>
    <property type="match status" value="1"/>
</dbReference>
<dbReference type="SMART" id="SM00958">
    <property type="entry name" value="SecA_PP_bind"/>
    <property type="match status" value="1"/>
</dbReference>
<dbReference type="SUPFAM" id="SSF81886">
    <property type="entry name" value="Helical scaffold and wing domains of SecA"/>
    <property type="match status" value="1"/>
</dbReference>
<dbReference type="SUPFAM" id="SSF52540">
    <property type="entry name" value="P-loop containing nucleoside triphosphate hydrolases"/>
    <property type="match status" value="2"/>
</dbReference>
<dbReference type="SUPFAM" id="SSF81767">
    <property type="entry name" value="Pre-protein crosslinking domain of SecA"/>
    <property type="match status" value="1"/>
</dbReference>
<dbReference type="PROSITE" id="PS01312">
    <property type="entry name" value="SECA"/>
    <property type="match status" value="1"/>
</dbReference>
<dbReference type="PROSITE" id="PS51196">
    <property type="entry name" value="SECA_MOTOR_DEAD"/>
    <property type="match status" value="1"/>
</dbReference>
<organism>
    <name type="scientific">Corynebacterium diphtheriae (strain ATCC 700971 / NCTC 13129 / Biotype gravis)</name>
    <dbReference type="NCBI Taxonomy" id="257309"/>
    <lineage>
        <taxon>Bacteria</taxon>
        <taxon>Bacillati</taxon>
        <taxon>Actinomycetota</taxon>
        <taxon>Actinomycetes</taxon>
        <taxon>Mycobacteriales</taxon>
        <taxon>Corynebacteriaceae</taxon>
        <taxon>Corynebacterium</taxon>
    </lineage>
</organism>